<feature type="signal peptide">
    <location>
        <begin position="1"/>
        <end position="20"/>
    </location>
</feature>
<feature type="chain" id="PRO_0000028315" description="Urokinase-type plasminogen activator">
    <location>
        <begin position="21"/>
        <end position="433"/>
    </location>
</feature>
<feature type="chain" id="PRO_0000028316" description="Urokinase-type plasminogen activator long chain A" evidence="1">
    <location>
        <begin position="21"/>
        <end position="179"/>
    </location>
</feature>
<feature type="chain" id="PRO_0000285895" description="Urokinase-type plasminogen activator short chain A" evidence="1">
    <location>
        <begin position="158"/>
        <end position="179"/>
    </location>
</feature>
<feature type="chain" id="PRO_0000028317" description="Urokinase-type plasminogen activator chain B" evidence="1">
    <location>
        <begin position="181"/>
        <end position="433"/>
    </location>
</feature>
<feature type="domain" description="EGF-like" evidence="3">
    <location>
        <begin position="29"/>
        <end position="65"/>
    </location>
</feature>
<feature type="domain" description="Kringle" evidence="4">
    <location>
        <begin position="72"/>
        <end position="153"/>
    </location>
</feature>
<feature type="domain" description="Peptidase S1" evidence="5">
    <location>
        <begin position="181"/>
        <end position="426"/>
    </location>
</feature>
<feature type="region of interest" description="Binds urokinase plasminogen activator surface receptor" evidence="1">
    <location>
        <begin position="36"/>
        <end position="59"/>
    </location>
</feature>
<feature type="region of interest" description="Connecting peptide">
    <location>
        <begin position="154"/>
        <end position="180"/>
    </location>
</feature>
<feature type="active site" description="Charge relay system" evidence="1">
    <location>
        <position position="226"/>
    </location>
</feature>
<feature type="active site" description="Charge relay system" evidence="1">
    <location>
        <position position="277"/>
    </location>
</feature>
<feature type="active site" description="Charge relay system" evidence="1">
    <location>
        <position position="378"/>
    </location>
</feature>
<feature type="modified residue" description="Phosphoserine" evidence="2">
    <location>
        <position position="160"/>
    </location>
</feature>
<feature type="disulfide bond" evidence="1">
    <location>
        <begin position="33"/>
        <end position="41"/>
    </location>
</feature>
<feature type="disulfide bond" evidence="1">
    <location>
        <begin position="35"/>
        <end position="53"/>
    </location>
</feature>
<feature type="disulfide bond" evidence="1">
    <location>
        <begin position="55"/>
        <end position="64"/>
    </location>
</feature>
<feature type="disulfide bond" evidence="1">
    <location>
        <begin position="72"/>
        <end position="153"/>
    </location>
</feature>
<feature type="disulfide bond" evidence="1">
    <location>
        <begin position="93"/>
        <end position="135"/>
    </location>
</feature>
<feature type="disulfide bond" evidence="1">
    <location>
        <begin position="124"/>
        <end position="148"/>
    </location>
</feature>
<feature type="disulfide bond" description="Interchain (between A and B chains)" evidence="3 4 5">
    <location>
        <begin position="170"/>
        <end position="301"/>
    </location>
</feature>
<feature type="disulfide bond" evidence="1">
    <location>
        <begin position="211"/>
        <end position="227"/>
    </location>
</feature>
<feature type="disulfide bond" evidence="1">
    <location>
        <begin position="219"/>
        <end position="290"/>
    </location>
</feature>
<feature type="disulfide bond" evidence="1">
    <location>
        <begin position="315"/>
        <end position="384"/>
    </location>
</feature>
<feature type="disulfide bond" evidence="1">
    <location>
        <begin position="347"/>
        <end position="363"/>
    </location>
</feature>
<feature type="disulfide bond" evidence="1">
    <location>
        <begin position="374"/>
        <end position="402"/>
    </location>
</feature>
<feature type="sequence conflict" description="In Ref. 4; CAA59796." evidence="6" ref="4">
    <original>A</original>
    <variation>T</variation>
    <location>
        <position position="189"/>
    </location>
</feature>
<evidence type="ECO:0000250" key="1"/>
<evidence type="ECO:0000250" key="2">
    <source>
        <dbReference type="UniProtKB" id="P00749"/>
    </source>
</evidence>
<evidence type="ECO:0000255" key="3">
    <source>
        <dbReference type="PROSITE-ProRule" id="PRU00076"/>
    </source>
</evidence>
<evidence type="ECO:0000255" key="4">
    <source>
        <dbReference type="PROSITE-ProRule" id="PRU00121"/>
    </source>
</evidence>
<evidence type="ECO:0000255" key="5">
    <source>
        <dbReference type="PROSITE-ProRule" id="PRU00274"/>
    </source>
</evidence>
<evidence type="ECO:0000305" key="6"/>
<sequence length="433" mass="48730">MRVLLACLLVCALVVSDSDGSNEVHKESGESNCGCLNGGKCVTYKYFSNIQRCSCPKKFQGEHCEIDTSKTCYQGNGHSYRGKANRDLSGRPCLAWDSPTVLLKMYHAHRSDAIQLGLGKHNYCRNPDNQRRPWCYVQIGLKQFVQFCMVQDCSVGKSPSSPREKEEFQCGQKALRPRFKIVGGQVTNAENQPWFAAIYRRHRGGSITYLCGGSLISPCWVVSATHCFIDHPKKENYIVYLGQSRLNSDTRGEMQFEVEKLILHEDYSAESLAHHNDIALLKIRTSRGQCAQPSRSIQTICLPPEHEDAHSRTRCEITGFGKENPSDYRYSDELKMTFVSLVSHEVCQQPHYYGAEVTDKMLCAADPQWETDSCQGDSGGPLVCTIQGRLTLTGIVSWGRDCAMKYKPGVYTRVSKFLPWINTHTRGEINLVL</sequence>
<protein>
    <recommendedName>
        <fullName>Urokinase-type plasminogen activator</fullName>
        <shortName>U-plasminogen activator</shortName>
        <shortName>uPA</shortName>
        <ecNumber>3.4.21.73</ecNumber>
    </recommendedName>
    <component>
        <recommendedName>
            <fullName>Urokinase-type plasminogen activator long chain A</fullName>
        </recommendedName>
    </component>
    <component>
        <recommendedName>
            <fullName>Urokinase-type plasminogen activator short chain A</fullName>
        </recommendedName>
    </component>
    <component>
        <recommendedName>
            <fullName>Urokinase-type plasminogen activator chain B</fullName>
        </recommendedName>
    </component>
</protein>
<name>UROK_BOVIN</name>
<accession>Q05589</accession>
<accession>A7E3W6</accession>
<accession>Q0IIG3</accession>
<accession>Q28209</accession>
<organism>
    <name type="scientific">Bos taurus</name>
    <name type="common">Bovine</name>
    <dbReference type="NCBI Taxonomy" id="9913"/>
    <lineage>
        <taxon>Eukaryota</taxon>
        <taxon>Metazoa</taxon>
        <taxon>Chordata</taxon>
        <taxon>Craniata</taxon>
        <taxon>Vertebrata</taxon>
        <taxon>Euteleostomi</taxon>
        <taxon>Mammalia</taxon>
        <taxon>Eutheria</taxon>
        <taxon>Laurasiatheria</taxon>
        <taxon>Artiodactyla</taxon>
        <taxon>Ruminantia</taxon>
        <taxon>Pecora</taxon>
        <taxon>Bovidae</taxon>
        <taxon>Bovinae</taxon>
        <taxon>Bos</taxon>
    </lineage>
</organism>
<dbReference type="EC" id="3.4.21.73"/>
<dbReference type="EMBL" id="L03546">
    <property type="protein sequence ID" value="AAA51419.1"/>
    <property type="molecule type" value="mRNA"/>
</dbReference>
<dbReference type="EMBL" id="BT030737">
    <property type="protein sequence ID" value="ABS45053.1"/>
    <property type="molecule type" value="mRNA"/>
</dbReference>
<dbReference type="EMBL" id="BC122657">
    <property type="protein sequence ID" value="AAI22658.1"/>
    <property type="molecule type" value="mRNA"/>
</dbReference>
<dbReference type="EMBL" id="X85801">
    <property type="protein sequence ID" value="CAA59796.1"/>
    <property type="molecule type" value="mRNA"/>
</dbReference>
<dbReference type="PIR" id="JN0560">
    <property type="entry name" value="JN0560"/>
</dbReference>
<dbReference type="RefSeq" id="NP_776572.1">
    <property type="nucleotide sequence ID" value="NM_174147.2"/>
</dbReference>
<dbReference type="RefSeq" id="XP_005226381.1">
    <property type="nucleotide sequence ID" value="XM_005226324.1"/>
</dbReference>
<dbReference type="RefSeq" id="XP_015316474.1">
    <property type="nucleotide sequence ID" value="XM_015460988.1"/>
</dbReference>
<dbReference type="RefSeq" id="XP_024842286.1">
    <property type="nucleotide sequence ID" value="XM_024986518.2"/>
</dbReference>
<dbReference type="SMR" id="Q05589"/>
<dbReference type="FunCoup" id="Q05589">
    <property type="interactions" value="206"/>
</dbReference>
<dbReference type="STRING" id="9913.ENSBTAP00000073210"/>
<dbReference type="MEROPS" id="S01.231"/>
<dbReference type="PaxDb" id="9913-ENSBTAP00000007806"/>
<dbReference type="Ensembl" id="ENSBTAT00000007806.4">
    <property type="protein sequence ID" value="ENSBTAP00000007806.2"/>
    <property type="gene ID" value="ENSBTAG00000005947.4"/>
</dbReference>
<dbReference type="GeneID" id="281408"/>
<dbReference type="KEGG" id="bta:281408"/>
<dbReference type="CTD" id="5328"/>
<dbReference type="VEuPathDB" id="HostDB:ENSBTAG00000005947"/>
<dbReference type="VGNC" id="VGNC:32975">
    <property type="gene designation" value="PLAU"/>
</dbReference>
<dbReference type="eggNOG" id="ENOG502QRMI">
    <property type="taxonomic scope" value="Eukaryota"/>
</dbReference>
<dbReference type="GeneTree" id="ENSGT01050000244971"/>
<dbReference type="HOGENOM" id="CLU_006842_18_4_1"/>
<dbReference type="InParanoid" id="Q05589"/>
<dbReference type="OMA" id="WPWCYVQ"/>
<dbReference type="OrthoDB" id="9406323at2759"/>
<dbReference type="TreeFam" id="TF329901"/>
<dbReference type="Reactome" id="R-BTA-6798695">
    <property type="pathway name" value="Neutrophil degranulation"/>
</dbReference>
<dbReference type="Reactome" id="R-BTA-75205">
    <property type="pathway name" value="Dissolution of Fibrin Clot"/>
</dbReference>
<dbReference type="Proteomes" id="UP000009136">
    <property type="component" value="Chromosome 28"/>
</dbReference>
<dbReference type="Bgee" id="ENSBTAG00000005947">
    <property type="expression patterns" value="Expressed in urethra and 105 other cell types or tissues"/>
</dbReference>
<dbReference type="GO" id="GO:0009986">
    <property type="term" value="C:cell surface"/>
    <property type="evidence" value="ECO:0007669"/>
    <property type="project" value="Ensembl"/>
</dbReference>
<dbReference type="GO" id="GO:0005615">
    <property type="term" value="C:extracellular space"/>
    <property type="evidence" value="ECO:0000314"/>
    <property type="project" value="AgBase"/>
</dbReference>
<dbReference type="GO" id="GO:0098637">
    <property type="term" value="C:protein complex involved in cell-matrix adhesion"/>
    <property type="evidence" value="ECO:0007669"/>
    <property type="project" value="Ensembl"/>
</dbReference>
<dbReference type="GO" id="GO:0097180">
    <property type="term" value="C:serine protease inhibitor complex"/>
    <property type="evidence" value="ECO:0007669"/>
    <property type="project" value="Ensembl"/>
</dbReference>
<dbReference type="GO" id="GO:1905370">
    <property type="term" value="C:serine-type endopeptidase complex"/>
    <property type="evidence" value="ECO:0007669"/>
    <property type="project" value="Ensembl"/>
</dbReference>
<dbReference type="GO" id="GO:0004252">
    <property type="term" value="F:serine-type endopeptidase activity"/>
    <property type="evidence" value="ECO:0000318"/>
    <property type="project" value="GO_Central"/>
</dbReference>
<dbReference type="GO" id="GO:0042730">
    <property type="term" value="P:fibrinolysis"/>
    <property type="evidence" value="ECO:0000318"/>
    <property type="project" value="GO_Central"/>
</dbReference>
<dbReference type="GO" id="GO:0031639">
    <property type="term" value="P:plasminogen activation"/>
    <property type="evidence" value="ECO:0007669"/>
    <property type="project" value="Ensembl"/>
</dbReference>
<dbReference type="GO" id="GO:0030335">
    <property type="term" value="P:positive regulation of cell migration"/>
    <property type="evidence" value="ECO:0007669"/>
    <property type="project" value="Ensembl"/>
</dbReference>
<dbReference type="GO" id="GO:0033628">
    <property type="term" value="P:regulation of cell adhesion mediated by integrin"/>
    <property type="evidence" value="ECO:0000318"/>
    <property type="project" value="GO_Central"/>
</dbReference>
<dbReference type="GO" id="GO:0042127">
    <property type="term" value="P:regulation of cell population proliferation"/>
    <property type="evidence" value="ECO:0007669"/>
    <property type="project" value="Ensembl"/>
</dbReference>
<dbReference type="GO" id="GO:0014910">
    <property type="term" value="P:regulation of smooth muscle cell migration"/>
    <property type="evidence" value="ECO:0007669"/>
    <property type="project" value="Ensembl"/>
</dbReference>
<dbReference type="GO" id="GO:2000097">
    <property type="term" value="P:regulation of smooth muscle cell-matrix adhesion"/>
    <property type="evidence" value="ECO:0007669"/>
    <property type="project" value="Ensembl"/>
</dbReference>
<dbReference type="GO" id="GO:0001666">
    <property type="term" value="P:response to hypoxia"/>
    <property type="evidence" value="ECO:0007669"/>
    <property type="project" value="Ensembl"/>
</dbReference>
<dbReference type="GO" id="GO:0014909">
    <property type="term" value="P:smooth muscle cell migration"/>
    <property type="evidence" value="ECO:0007669"/>
    <property type="project" value="Ensembl"/>
</dbReference>
<dbReference type="CDD" id="cd00108">
    <property type="entry name" value="KR"/>
    <property type="match status" value="1"/>
</dbReference>
<dbReference type="CDD" id="cd00190">
    <property type="entry name" value="Tryp_SPc"/>
    <property type="match status" value="1"/>
</dbReference>
<dbReference type="FunFam" id="2.40.10.10:FF:000068">
    <property type="entry name" value="transmembrane protease serine 2"/>
    <property type="match status" value="1"/>
</dbReference>
<dbReference type="FunFam" id="2.10.25.10:FF:000266">
    <property type="entry name" value="Urokinase-type plasminogen activator"/>
    <property type="match status" value="1"/>
</dbReference>
<dbReference type="FunFam" id="2.40.10.10:FF:000065">
    <property type="entry name" value="Urokinase-type plasminogen activator"/>
    <property type="match status" value="1"/>
</dbReference>
<dbReference type="FunFam" id="2.40.20.10:FF:000001">
    <property type="entry name" value="Urokinase-type plasminogen activator"/>
    <property type="match status" value="1"/>
</dbReference>
<dbReference type="Gene3D" id="2.10.25.10">
    <property type="entry name" value="Laminin"/>
    <property type="match status" value="1"/>
</dbReference>
<dbReference type="Gene3D" id="2.40.20.10">
    <property type="entry name" value="Plasminogen Kringle 4"/>
    <property type="match status" value="1"/>
</dbReference>
<dbReference type="Gene3D" id="2.40.10.10">
    <property type="entry name" value="Trypsin-like serine proteases"/>
    <property type="match status" value="2"/>
</dbReference>
<dbReference type="InterPro" id="IPR000742">
    <property type="entry name" value="EGF-like_dom"/>
</dbReference>
<dbReference type="InterPro" id="IPR000001">
    <property type="entry name" value="Kringle"/>
</dbReference>
<dbReference type="InterPro" id="IPR013806">
    <property type="entry name" value="Kringle-like"/>
</dbReference>
<dbReference type="InterPro" id="IPR018056">
    <property type="entry name" value="Kringle_CS"/>
</dbReference>
<dbReference type="InterPro" id="IPR038178">
    <property type="entry name" value="Kringle_sf"/>
</dbReference>
<dbReference type="InterPro" id="IPR009003">
    <property type="entry name" value="Peptidase_S1_PA"/>
</dbReference>
<dbReference type="InterPro" id="IPR043504">
    <property type="entry name" value="Peptidase_S1_PA_chymotrypsin"/>
</dbReference>
<dbReference type="InterPro" id="IPR001314">
    <property type="entry name" value="Peptidase_S1A"/>
</dbReference>
<dbReference type="InterPro" id="IPR050127">
    <property type="entry name" value="Serine_Proteases_S1"/>
</dbReference>
<dbReference type="InterPro" id="IPR001254">
    <property type="entry name" value="Trypsin_dom"/>
</dbReference>
<dbReference type="InterPro" id="IPR018114">
    <property type="entry name" value="TRYPSIN_HIS"/>
</dbReference>
<dbReference type="InterPro" id="IPR033116">
    <property type="entry name" value="TRYPSIN_SER"/>
</dbReference>
<dbReference type="PANTHER" id="PTHR24264">
    <property type="entry name" value="TRYPSIN-RELATED"/>
    <property type="match status" value="1"/>
</dbReference>
<dbReference type="PANTHER" id="PTHR24264:SF38">
    <property type="entry name" value="UROKINASE-TYPE PLASMINOGEN ACTIVATOR"/>
    <property type="match status" value="1"/>
</dbReference>
<dbReference type="Pfam" id="PF00051">
    <property type="entry name" value="Kringle"/>
    <property type="match status" value="1"/>
</dbReference>
<dbReference type="Pfam" id="PF00089">
    <property type="entry name" value="Trypsin"/>
    <property type="match status" value="1"/>
</dbReference>
<dbReference type="PRINTS" id="PR00722">
    <property type="entry name" value="CHYMOTRYPSIN"/>
</dbReference>
<dbReference type="PRINTS" id="PR00018">
    <property type="entry name" value="KRINGLE"/>
</dbReference>
<dbReference type="SMART" id="SM00130">
    <property type="entry name" value="KR"/>
    <property type="match status" value="1"/>
</dbReference>
<dbReference type="SMART" id="SM00020">
    <property type="entry name" value="Tryp_SPc"/>
    <property type="match status" value="1"/>
</dbReference>
<dbReference type="SUPFAM" id="SSF57440">
    <property type="entry name" value="Kringle-like"/>
    <property type="match status" value="1"/>
</dbReference>
<dbReference type="SUPFAM" id="SSF50494">
    <property type="entry name" value="Trypsin-like serine proteases"/>
    <property type="match status" value="1"/>
</dbReference>
<dbReference type="PROSITE" id="PS00022">
    <property type="entry name" value="EGF_1"/>
    <property type="match status" value="1"/>
</dbReference>
<dbReference type="PROSITE" id="PS50026">
    <property type="entry name" value="EGF_3"/>
    <property type="match status" value="1"/>
</dbReference>
<dbReference type="PROSITE" id="PS00021">
    <property type="entry name" value="KRINGLE_1"/>
    <property type="match status" value="1"/>
</dbReference>
<dbReference type="PROSITE" id="PS50070">
    <property type="entry name" value="KRINGLE_2"/>
    <property type="match status" value="1"/>
</dbReference>
<dbReference type="PROSITE" id="PS50240">
    <property type="entry name" value="TRYPSIN_DOM"/>
    <property type="match status" value="1"/>
</dbReference>
<dbReference type="PROSITE" id="PS00134">
    <property type="entry name" value="TRYPSIN_HIS"/>
    <property type="match status" value="1"/>
</dbReference>
<dbReference type="PROSITE" id="PS00135">
    <property type="entry name" value="TRYPSIN_SER"/>
    <property type="match status" value="1"/>
</dbReference>
<proteinExistence type="evidence at transcript level"/>
<comment type="function">
    <text evidence="2">Specifically cleaves the zymogen plasminogen to form the active enzyme plasmin.</text>
</comment>
<comment type="catalytic activity">
    <reaction>
        <text>Specific cleavage of Arg-|-Val bond in plasminogen to form plasmin.</text>
        <dbReference type="EC" id="3.4.21.73"/>
    </reaction>
</comment>
<comment type="activity regulation">
    <text evidence="2">Inhibited by SERPINA5 (By similarity). Inhibited by SERPINE1 (By similarity).</text>
</comment>
<comment type="subunit">
    <text evidence="2">Found in high and low molecular mass forms. Each consists of two chains, A and B. The high molecular mass form contains a long chain A which is cleaved to yield a short chain A. Forms heterodimer with SERPINA5. Binds LRP1B; binding is followed by internalization and degradation. Interacts with MRC2. Interacts with PLAUR. In complex with SERPINE1, interacts with PLAUR/uPAR. Interacts with SORL1 and LRP1, either alone or in complex with SERPINE1; these interactions are abolished in the presence of LRPAP1/RAP. The ternary complex composed of PLAUR-PLAU-PAI1 also interacts with SORLA.</text>
</comment>
<comment type="subcellular location">
    <subcellularLocation>
        <location evidence="2">Secreted</location>
    </subcellularLocation>
</comment>
<comment type="induction">
    <text>By retinoic acid.</text>
</comment>
<comment type="PTM">
    <text evidence="2">Produced as an inactive single-chain protein (pro-uPA or sc-uPA), is processed into the active disulfide-linked two-chain form of PLAU/uPA by a proteolytic event mediated, at least, by TMPRSS4.</text>
</comment>
<comment type="similarity">
    <text evidence="5">Belongs to the peptidase S1 family.</text>
</comment>
<keyword id="KW-1015">Disulfide bond</keyword>
<keyword id="KW-0245">EGF-like domain</keyword>
<keyword id="KW-0378">Hydrolase</keyword>
<keyword id="KW-0420">Kringle</keyword>
<keyword id="KW-0597">Phosphoprotein</keyword>
<keyword id="KW-0617">Plasminogen activation</keyword>
<keyword id="KW-0645">Protease</keyword>
<keyword id="KW-1185">Reference proteome</keyword>
<keyword id="KW-0964">Secreted</keyword>
<keyword id="KW-0720">Serine protease</keyword>
<keyword id="KW-0732">Signal</keyword>
<keyword id="KW-0865">Zymogen</keyword>
<reference key="1">
    <citation type="journal article" date="1993" name="Gene">
        <title>Bovine urokinase-type plasminogen activator and its receptor: cloning and induction by retinoic acid.</title>
        <authorList>
            <person name="Kraetzschmar J."/>
            <person name="Haendler B."/>
            <person name="Kojima S."/>
            <person name="Rifkin D.B."/>
            <person name="Schleuning W.-D."/>
        </authorList>
    </citation>
    <scope>NUCLEOTIDE SEQUENCE [MRNA]</scope>
    <source>
        <tissue>Aortic endothelium</tissue>
    </source>
</reference>
<reference key="2">
    <citation type="journal article" date="2005" name="BMC Genomics">
        <title>Characterization of 954 bovine full-CDS cDNA sequences.</title>
        <authorList>
            <person name="Harhay G.P."/>
            <person name="Sonstegard T.S."/>
            <person name="Keele J.W."/>
            <person name="Heaton M.P."/>
            <person name="Clawson M.L."/>
            <person name="Snelling W.M."/>
            <person name="Wiedmann R.T."/>
            <person name="Van Tassell C.P."/>
            <person name="Smith T.P.L."/>
        </authorList>
    </citation>
    <scope>NUCLEOTIDE SEQUENCE [LARGE SCALE MRNA]</scope>
</reference>
<reference key="3">
    <citation type="submission" date="2006-08" db="EMBL/GenBank/DDBJ databases">
        <authorList>
            <consortium name="NIH - Mammalian Gene Collection (MGC) project"/>
        </authorList>
    </citation>
    <scope>NUCLEOTIDE SEQUENCE [LARGE SCALE MRNA]</scope>
    <source>
        <strain>Hereford</strain>
        <tissue>Fetal skin</tissue>
    </source>
</reference>
<reference key="4">
    <citation type="journal article" date="1995" name="Int. Dairy J.">
        <title>Cloning and characterization of the bovine plasminogen activators uPA and tPA.</title>
        <authorList>
            <person name="Ravn P."/>
            <person name="Berglund L."/>
            <person name="Petersen T.E."/>
        </authorList>
        <dbReference type="AGRICOLA" id="IND20546782"/>
    </citation>
    <scope>NUCLEOTIDE SEQUENCE [MRNA] OF 12-433</scope>
    <source>
        <tissue>Kidney</tissue>
    </source>
</reference>
<gene>
    <name type="primary">PLAU</name>
</gene>